<keyword id="KW-0539">Nucleus</keyword>
<keyword id="KW-0597">Phosphoprotein</keyword>
<keyword id="KW-0687">Ribonucleoprotein</keyword>
<keyword id="KW-0690">Ribosome biogenesis</keyword>
<keyword id="KW-0698">rRNA processing</keyword>
<organism>
    <name type="scientific">Saccharomyces cerevisiae (strain Lalvin EC1118 / Prise de mousse)</name>
    <name type="common">Baker's yeast</name>
    <dbReference type="NCBI Taxonomy" id="643680"/>
    <lineage>
        <taxon>Eukaryota</taxon>
        <taxon>Fungi</taxon>
        <taxon>Dikarya</taxon>
        <taxon>Ascomycota</taxon>
        <taxon>Saccharomycotina</taxon>
        <taxon>Saccharomycetes</taxon>
        <taxon>Saccharomycetales</taxon>
        <taxon>Saccharomycetaceae</taxon>
        <taxon>Saccharomyces</taxon>
    </lineage>
</organism>
<evidence type="ECO:0000250" key="1"/>
<evidence type="ECO:0000250" key="2">
    <source>
        <dbReference type="UniProtKB" id="P40498"/>
    </source>
</evidence>
<evidence type="ECO:0000256" key="3">
    <source>
        <dbReference type="SAM" id="MobiDB-lite"/>
    </source>
</evidence>
<evidence type="ECO:0000305" key="4"/>
<gene>
    <name type="primary">UTP25</name>
    <name type="ORF">EC1118_1I12_0958g</name>
</gene>
<reference key="1">
    <citation type="journal article" date="2009" name="Proc. Natl. Acad. Sci. U.S.A.">
        <title>Eukaryote-to-eukaryote gene transfer events revealed by the genome sequence of the wine yeast Saccharomyces cerevisiae EC1118.</title>
        <authorList>
            <person name="Novo M."/>
            <person name="Bigey F."/>
            <person name="Beyne E."/>
            <person name="Galeote V."/>
            <person name="Gavory F."/>
            <person name="Mallet S."/>
            <person name="Cambon B."/>
            <person name="Legras J.-L."/>
            <person name="Wincker P."/>
            <person name="Casaregola S."/>
            <person name="Dequin S."/>
        </authorList>
    </citation>
    <scope>NUCLEOTIDE SEQUENCE [LARGE SCALE GENOMIC DNA]</scope>
    <source>
        <strain>Lalvin EC1118 / Prise de mousse</strain>
    </source>
</reference>
<dbReference type="EMBL" id="FN393074">
    <property type="protein sequence ID" value="CAY80421.1"/>
    <property type="molecule type" value="Genomic_DNA"/>
</dbReference>
<dbReference type="HOGENOM" id="CLU_018705_0_1_1"/>
<dbReference type="OrthoDB" id="30001at4893"/>
<dbReference type="Proteomes" id="UP000000286">
    <property type="component" value="Chromosome IX, Scaffold EC1118_1I12"/>
</dbReference>
<dbReference type="GO" id="GO:0005730">
    <property type="term" value="C:nucleolus"/>
    <property type="evidence" value="ECO:0007669"/>
    <property type="project" value="UniProtKB-SubCell"/>
</dbReference>
<dbReference type="GO" id="GO:0032040">
    <property type="term" value="C:small-subunit processome"/>
    <property type="evidence" value="ECO:0007669"/>
    <property type="project" value="TreeGrafter"/>
</dbReference>
<dbReference type="GO" id="GO:0019843">
    <property type="term" value="F:rRNA binding"/>
    <property type="evidence" value="ECO:0007669"/>
    <property type="project" value="TreeGrafter"/>
</dbReference>
<dbReference type="GO" id="GO:0034511">
    <property type="term" value="F:U3 snoRNA binding"/>
    <property type="evidence" value="ECO:0007669"/>
    <property type="project" value="InterPro"/>
</dbReference>
<dbReference type="GO" id="GO:0000462">
    <property type="term" value="P:maturation of SSU-rRNA from tricistronic rRNA transcript (SSU-rRNA, 5.8S rRNA, LSU-rRNA)"/>
    <property type="evidence" value="ECO:0007669"/>
    <property type="project" value="TreeGrafter"/>
</dbReference>
<dbReference type="FunFam" id="3.40.50.300:FF:002072">
    <property type="entry name" value="U3 small nucleolar RNA-associated protein 25"/>
    <property type="match status" value="1"/>
</dbReference>
<dbReference type="Gene3D" id="3.40.50.300">
    <property type="entry name" value="P-loop containing nucleotide triphosphate hydrolases"/>
    <property type="match status" value="1"/>
</dbReference>
<dbReference type="InterPro" id="IPR027417">
    <property type="entry name" value="P-loop_NTPase"/>
</dbReference>
<dbReference type="InterPro" id="IPR010678">
    <property type="entry name" value="UTP25"/>
</dbReference>
<dbReference type="InterPro" id="IPR053939">
    <property type="entry name" value="UTP25_C"/>
</dbReference>
<dbReference type="InterPro" id="IPR053940">
    <property type="entry name" value="UTP25_NTPase-like"/>
</dbReference>
<dbReference type="PANTHER" id="PTHR12933">
    <property type="entry name" value="ORF PROTEIN-RELATED"/>
    <property type="match status" value="1"/>
</dbReference>
<dbReference type="PANTHER" id="PTHR12933:SF0">
    <property type="entry name" value="U3 SMALL NUCLEOLAR RNA-ASSOCIATED PROTEIN 25 HOMOLOG"/>
    <property type="match status" value="1"/>
</dbReference>
<dbReference type="Pfam" id="PF06862">
    <property type="entry name" value="Utp25_C"/>
    <property type="match status" value="1"/>
</dbReference>
<dbReference type="Pfam" id="PF22916">
    <property type="entry name" value="UTP25_NTPase-like"/>
    <property type="match status" value="1"/>
</dbReference>
<dbReference type="SUPFAM" id="SSF52540">
    <property type="entry name" value="P-loop containing nucleoside triphosphate hydrolases"/>
    <property type="match status" value="1"/>
</dbReference>
<sequence>MSDSSVREKNDNFRGYRKRGRQELRKIKRSSARTEGGSTETLEDVAEDIDHRSDEDEVSDVDSGDDFDIEDEEGKKEKVYDALLTILKSEHPEPKRRRREADESNKAPAEVGEDEHENTEHGPVDDQLEIENGLLGNHEDDNDDDSSEDEKDIDSEDEQDPFESHFNQVPEKFVDELSNAFKTKSVKYKSVKGSLSDSESYIYAKPVVIGEEALVESPYRSSSIYSYFLKQRLKVQNGLLDKKTDPLTALQKKLVDPMFQYKDILYEYDSYEKDEDEYRDLYALHVLNHIYKTRDRILKNNQRLQDNPDTEHLDQGFTRPKVLIVVPTREVAYRVVDKIISKSGIDQVDKKGKFYDQFRDDSLPPKSKPKSFQHIFRGNTNDFFVVGLKFTRKAIKLYSNFYQSDIIVCSPLGIQMILENTDKKKRQDDFLSSIELMVIDQLHSIEYQNISHIFTIFDHLNKIPDQQHEADFSRIRMWYINEQAKLFRQTMVFTKYISPAANSLINGRCRNMAGRWKNHKVIGSENSSIGQSGLKIRQIFHRFDIIGNSIIEEPDYRFKFFTSVIIPGIVKSTGYEDGILIYIPDYTDFIRIRNYMKEKTTILFGDINEYSSQRQLNANRSLFQQGRLKVMLYTERLHHYRRYEIKGVKSVVFYKPPNNPEFYNEVVRFIGKNAFLGNTDLNISTVRCIYSKLDGLSLERIVGTKRAAVLSHAQKEIYEFK</sequence>
<accession>C8ZAF8</accession>
<feature type="chain" id="PRO_0000408149" description="U3 small nucleolar RNA-associated protein 25">
    <location>
        <begin position="1"/>
        <end position="721"/>
    </location>
</feature>
<feature type="region of interest" description="Disordered" evidence="3">
    <location>
        <begin position="1"/>
        <end position="168"/>
    </location>
</feature>
<feature type="compositionally biased region" description="Basic and acidic residues" evidence="3">
    <location>
        <begin position="1"/>
        <end position="14"/>
    </location>
</feature>
<feature type="compositionally biased region" description="Basic residues" evidence="3">
    <location>
        <begin position="15"/>
        <end position="31"/>
    </location>
</feature>
<feature type="compositionally biased region" description="Acidic residues" evidence="3">
    <location>
        <begin position="55"/>
        <end position="72"/>
    </location>
</feature>
<feature type="compositionally biased region" description="Basic and acidic residues" evidence="3">
    <location>
        <begin position="88"/>
        <end position="105"/>
    </location>
</feature>
<feature type="compositionally biased region" description="Acidic residues" evidence="3">
    <location>
        <begin position="140"/>
        <end position="161"/>
    </location>
</feature>
<feature type="modified residue" description="Phosphoserine" evidence="2">
    <location>
        <position position="53"/>
    </location>
</feature>
<feature type="modified residue" description="Phosphoserine" evidence="2">
    <location>
        <position position="63"/>
    </location>
</feature>
<feature type="modified residue" description="Phosphoserine" evidence="2">
    <location>
        <position position="196"/>
    </location>
</feature>
<name>UTP25_YEAS8</name>
<proteinExistence type="inferred from homology"/>
<protein>
    <recommendedName>
        <fullName>U3 small nucleolar RNA-associated protein 25</fullName>
        <shortName>U3 snoRNA-associated protein 25</shortName>
    </recommendedName>
    <alternativeName>
        <fullName>U three protein 25</fullName>
    </alternativeName>
</protein>
<comment type="function">
    <text evidence="1">DEAD-box RNA helicase-like protein required for pre-18S rRNA processing, specifically at sites A0, A1, and A2.</text>
</comment>
<comment type="subunit">
    <text evidence="1">Interacts with snoRNA U3. Interacts with MPP10, RRp9, UTP8 and UTP18. Component of the ribosomal small subunit (SSU) processome composed of at least 40 protein subunits and snoRNA U3.</text>
</comment>
<comment type="subcellular location">
    <subcellularLocation>
        <location evidence="1">Nucleus</location>
        <location evidence="1">Nucleolus</location>
    </subcellularLocation>
</comment>
<comment type="similarity">
    <text evidence="4">Belongs to the UTP25 family.</text>
</comment>